<keyword id="KW-0963">Cytoplasm</keyword>
<keyword id="KW-0444">Lipid biosynthesis</keyword>
<keyword id="KW-0443">Lipid metabolism</keyword>
<keyword id="KW-0520">NAD</keyword>
<keyword id="KW-0521">NADP</keyword>
<keyword id="KW-0547">Nucleotide-binding</keyword>
<keyword id="KW-0560">Oxidoreductase</keyword>
<keyword id="KW-0594">Phospholipid biosynthesis</keyword>
<keyword id="KW-1208">Phospholipid metabolism</keyword>
<keyword id="KW-1185">Reference proteome</keyword>
<reference key="1">
    <citation type="journal article" date="2002" name="Nucleic Acids Res.">
        <title>The complete genomic sequence of Mycoplasma penetrans, an intracellular bacterial pathogen in humans.</title>
        <authorList>
            <person name="Sasaki Y."/>
            <person name="Ishikawa J."/>
            <person name="Yamashita A."/>
            <person name="Oshima K."/>
            <person name="Kenri T."/>
            <person name="Furuya K."/>
            <person name="Yoshino C."/>
            <person name="Horino A."/>
            <person name="Shiba T."/>
            <person name="Sasaki T."/>
            <person name="Hattori M."/>
        </authorList>
    </citation>
    <scope>NUCLEOTIDE SEQUENCE [LARGE SCALE GENOMIC DNA]</scope>
    <source>
        <strain>HF-2</strain>
    </source>
</reference>
<name>GPDA_MALP2</name>
<dbReference type="EC" id="1.1.1.94" evidence="1"/>
<dbReference type="EMBL" id="BA000026">
    <property type="protein sequence ID" value="BAC44021.1"/>
    <property type="molecule type" value="Genomic_DNA"/>
</dbReference>
<dbReference type="RefSeq" id="WP_011077057.1">
    <property type="nucleotide sequence ID" value="NC_004432.1"/>
</dbReference>
<dbReference type="SMR" id="Q8EWH5"/>
<dbReference type="FunCoup" id="Q8EWH5">
    <property type="interactions" value="218"/>
</dbReference>
<dbReference type="STRING" id="272633.gene:10731330"/>
<dbReference type="KEGG" id="mpe:MYPE2300"/>
<dbReference type="eggNOG" id="COG0240">
    <property type="taxonomic scope" value="Bacteria"/>
</dbReference>
<dbReference type="HOGENOM" id="CLU_033449_0_0_14"/>
<dbReference type="InParanoid" id="Q8EWH5"/>
<dbReference type="UniPathway" id="UPA00940"/>
<dbReference type="Proteomes" id="UP000002522">
    <property type="component" value="Chromosome"/>
</dbReference>
<dbReference type="GO" id="GO:0005829">
    <property type="term" value="C:cytosol"/>
    <property type="evidence" value="ECO:0007669"/>
    <property type="project" value="TreeGrafter"/>
</dbReference>
<dbReference type="GO" id="GO:0047952">
    <property type="term" value="F:glycerol-3-phosphate dehydrogenase [NAD(P)+] activity"/>
    <property type="evidence" value="ECO:0007669"/>
    <property type="project" value="UniProtKB-UniRule"/>
</dbReference>
<dbReference type="GO" id="GO:0051287">
    <property type="term" value="F:NAD binding"/>
    <property type="evidence" value="ECO:0007669"/>
    <property type="project" value="InterPro"/>
</dbReference>
<dbReference type="GO" id="GO:0005975">
    <property type="term" value="P:carbohydrate metabolic process"/>
    <property type="evidence" value="ECO:0007669"/>
    <property type="project" value="InterPro"/>
</dbReference>
<dbReference type="GO" id="GO:0046167">
    <property type="term" value="P:glycerol-3-phosphate biosynthetic process"/>
    <property type="evidence" value="ECO:0007669"/>
    <property type="project" value="UniProtKB-UniRule"/>
</dbReference>
<dbReference type="GO" id="GO:0046168">
    <property type="term" value="P:glycerol-3-phosphate catabolic process"/>
    <property type="evidence" value="ECO:0007669"/>
    <property type="project" value="InterPro"/>
</dbReference>
<dbReference type="GO" id="GO:0006650">
    <property type="term" value="P:glycerophospholipid metabolic process"/>
    <property type="evidence" value="ECO:0007669"/>
    <property type="project" value="UniProtKB-UniRule"/>
</dbReference>
<dbReference type="GO" id="GO:0008654">
    <property type="term" value="P:phospholipid biosynthetic process"/>
    <property type="evidence" value="ECO:0007669"/>
    <property type="project" value="UniProtKB-KW"/>
</dbReference>
<dbReference type="Gene3D" id="1.10.1040.10">
    <property type="entry name" value="N-(1-d-carboxylethyl)-l-norvaline Dehydrogenase, domain 2"/>
    <property type="match status" value="1"/>
</dbReference>
<dbReference type="Gene3D" id="3.40.50.720">
    <property type="entry name" value="NAD(P)-binding Rossmann-like Domain"/>
    <property type="match status" value="1"/>
</dbReference>
<dbReference type="InterPro" id="IPR008927">
    <property type="entry name" value="6-PGluconate_DH-like_C_sf"/>
</dbReference>
<dbReference type="InterPro" id="IPR013328">
    <property type="entry name" value="6PGD_dom2"/>
</dbReference>
<dbReference type="InterPro" id="IPR006168">
    <property type="entry name" value="G3P_DH_NAD-dep"/>
</dbReference>
<dbReference type="InterPro" id="IPR006109">
    <property type="entry name" value="G3P_DH_NAD-dep_C"/>
</dbReference>
<dbReference type="InterPro" id="IPR011128">
    <property type="entry name" value="G3P_DH_NAD-dep_N"/>
</dbReference>
<dbReference type="InterPro" id="IPR036291">
    <property type="entry name" value="NAD(P)-bd_dom_sf"/>
</dbReference>
<dbReference type="NCBIfam" id="NF000940">
    <property type="entry name" value="PRK00094.1-2"/>
    <property type="match status" value="1"/>
</dbReference>
<dbReference type="NCBIfam" id="NF000942">
    <property type="entry name" value="PRK00094.1-4"/>
    <property type="match status" value="1"/>
</dbReference>
<dbReference type="PANTHER" id="PTHR11728">
    <property type="entry name" value="GLYCEROL-3-PHOSPHATE DEHYDROGENASE"/>
    <property type="match status" value="1"/>
</dbReference>
<dbReference type="PANTHER" id="PTHR11728:SF1">
    <property type="entry name" value="GLYCEROL-3-PHOSPHATE DEHYDROGENASE [NAD(+)] 2, CHLOROPLASTIC"/>
    <property type="match status" value="1"/>
</dbReference>
<dbReference type="Pfam" id="PF07479">
    <property type="entry name" value="NAD_Gly3P_dh_C"/>
    <property type="match status" value="1"/>
</dbReference>
<dbReference type="Pfam" id="PF01210">
    <property type="entry name" value="NAD_Gly3P_dh_N"/>
    <property type="match status" value="1"/>
</dbReference>
<dbReference type="PIRSF" id="PIRSF000114">
    <property type="entry name" value="Glycerol-3-P_dh"/>
    <property type="match status" value="1"/>
</dbReference>
<dbReference type="PRINTS" id="PR00077">
    <property type="entry name" value="GPDHDRGNASE"/>
</dbReference>
<dbReference type="SUPFAM" id="SSF48179">
    <property type="entry name" value="6-phosphogluconate dehydrogenase C-terminal domain-like"/>
    <property type="match status" value="1"/>
</dbReference>
<dbReference type="SUPFAM" id="SSF51735">
    <property type="entry name" value="NAD(P)-binding Rossmann-fold domains"/>
    <property type="match status" value="1"/>
</dbReference>
<dbReference type="PROSITE" id="PS00957">
    <property type="entry name" value="NAD_G3PDH"/>
    <property type="match status" value="1"/>
</dbReference>
<accession>Q8EWH5</accession>
<organism>
    <name type="scientific">Malacoplasma penetrans (strain HF-2)</name>
    <name type="common">Mycoplasma penetrans</name>
    <dbReference type="NCBI Taxonomy" id="272633"/>
    <lineage>
        <taxon>Bacteria</taxon>
        <taxon>Bacillati</taxon>
        <taxon>Mycoplasmatota</taxon>
        <taxon>Mycoplasmoidales</taxon>
        <taxon>Mycoplasmoidaceae</taxon>
        <taxon>Malacoplasma</taxon>
    </lineage>
</organism>
<comment type="function">
    <text evidence="1">Catalyzes the reduction of the glycolytic intermediate dihydroxyacetone phosphate (DHAP) to sn-glycerol 3-phosphate (G3P), the key precursor for phospholipid synthesis.</text>
</comment>
<comment type="catalytic activity">
    <reaction evidence="1">
        <text>sn-glycerol 3-phosphate + NAD(+) = dihydroxyacetone phosphate + NADH + H(+)</text>
        <dbReference type="Rhea" id="RHEA:11092"/>
        <dbReference type="ChEBI" id="CHEBI:15378"/>
        <dbReference type="ChEBI" id="CHEBI:57540"/>
        <dbReference type="ChEBI" id="CHEBI:57597"/>
        <dbReference type="ChEBI" id="CHEBI:57642"/>
        <dbReference type="ChEBI" id="CHEBI:57945"/>
        <dbReference type="EC" id="1.1.1.94"/>
    </reaction>
    <physiologicalReaction direction="right-to-left" evidence="1">
        <dbReference type="Rhea" id="RHEA:11094"/>
    </physiologicalReaction>
</comment>
<comment type="catalytic activity">
    <reaction evidence="1">
        <text>sn-glycerol 3-phosphate + NADP(+) = dihydroxyacetone phosphate + NADPH + H(+)</text>
        <dbReference type="Rhea" id="RHEA:11096"/>
        <dbReference type="ChEBI" id="CHEBI:15378"/>
        <dbReference type="ChEBI" id="CHEBI:57597"/>
        <dbReference type="ChEBI" id="CHEBI:57642"/>
        <dbReference type="ChEBI" id="CHEBI:57783"/>
        <dbReference type="ChEBI" id="CHEBI:58349"/>
        <dbReference type="EC" id="1.1.1.94"/>
    </reaction>
    <physiologicalReaction direction="right-to-left" evidence="1">
        <dbReference type="Rhea" id="RHEA:11098"/>
    </physiologicalReaction>
</comment>
<comment type="pathway">
    <text evidence="1">Membrane lipid metabolism; glycerophospholipid metabolism.</text>
</comment>
<comment type="subcellular location">
    <subcellularLocation>
        <location evidence="1">Cytoplasm</location>
    </subcellularLocation>
</comment>
<comment type="similarity">
    <text evidence="1 2">Belongs to the NAD-dependent glycerol-3-phosphate dehydrogenase family.</text>
</comment>
<gene>
    <name evidence="1" type="primary">gpsA</name>
    <name type="ordered locus">MYPE2300</name>
</gene>
<sequence length="338" mass="37392">MINNRICILGTGAWATALGSRLSLNGNTVFLWGIDNNEVNDINSGYNKKYFGNTKFSSSLSATTDLKTAIGDSKYIIFAIPSTALDSVLDKVKEFLSDKKSQVILINVVKGIDAETSQILSNKIKSKLGSHYYSRLVTLCGPSFATEVFEEKPTVINGTGKNLKIVKQVCELFNSDVFKVIPINDIVGLQVFSSLKNLLAIAVGLSQAEYTSVNTMSAILTMGIEEIQKIACKMKAKKWTIMSFCGIGDIFLTCSSTQSRNYSFGQDLLKKGVEKTIKENKKTVEGFEVYKTAKNIITKYNINAPIFSSIIEVLEGKLDPKEFSKKCLELFWNQKINK</sequence>
<proteinExistence type="inferred from homology"/>
<feature type="chain" id="PRO_0000137995" description="Glycerol-3-phosphate dehydrogenase [NAD(P)+]">
    <location>
        <begin position="1"/>
        <end position="338"/>
    </location>
</feature>
<feature type="active site" description="Proton acceptor" evidence="1">
    <location>
        <position position="196"/>
    </location>
</feature>
<feature type="binding site" evidence="1">
    <location>
        <position position="14"/>
    </location>
    <ligand>
        <name>NADPH</name>
        <dbReference type="ChEBI" id="CHEBI:57783"/>
    </ligand>
</feature>
<feature type="binding site" evidence="1">
    <location>
        <position position="50"/>
    </location>
    <ligand>
        <name>NADPH</name>
        <dbReference type="ChEBI" id="CHEBI:57783"/>
    </ligand>
</feature>
<feature type="binding site" evidence="1">
    <location>
        <position position="110"/>
    </location>
    <ligand>
        <name>NADPH</name>
        <dbReference type="ChEBI" id="CHEBI:57783"/>
    </ligand>
</feature>
<feature type="binding site" evidence="1">
    <location>
        <position position="110"/>
    </location>
    <ligand>
        <name>sn-glycerol 3-phosphate</name>
        <dbReference type="ChEBI" id="CHEBI:57597"/>
    </ligand>
</feature>
<feature type="binding site" evidence="1">
    <location>
        <position position="141"/>
    </location>
    <ligand>
        <name>sn-glycerol 3-phosphate</name>
        <dbReference type="ChEBI" id="CHEBI:57597"/>
    </ligand>
</feature>
<feature type="binding site" evidence="1">
    <location>
        <position position="143"/>
    </location>
    <ligand>
        <name>sn-glycerol 3-phosphate</name>
        <dbReference type="ChEBI" id="CHEBI:57597"/>
    </ligand>
</feature>
<feature type="binding site" evidence="1">
    <location>
        <position position="145"/>
    </location>
    <ligand>
        <name>NADPH</name>
        <dbReference type="ChEBI" id="CHEBI:57783"/>
    </ligand>
</feature>
<feature type="binding site" evidence="1">
    <location>
        <position position="196"/>
    </location>
    <ligand>
        <name>sn-glycerol 3-phosphate</name>
        <dbReference type="ChEBI" id="CHEBI:57597"/>
    </ligand>
</feature>
<feature type="binding site" evidence="1">
    <location>
        <position position="249"/>
    </location>
    <ligand>
        <name>sn-glycerol 3-phosphate</name>
        <dbReference type="ChEBI" id="CHEBI:57597"/>
    </ligand>
</feature>
<feature type="binding site" evidence="1">
    <location>
        <position position="259"/>
    </location>
    <ligand>
        <name>sn-glycerol 3-phosphate</name>
        <dbReference type="ChEBI" id="CHEBI:57597"/>
    </ligand>
</feature>
<feature type="binding site" evidence="1">
    <location>
        <position position="260"/>
    </location>
    <ligand>
        <name>NADPH</name>
        <dbReference type="ChEBI" id="CHEBI:57783"/>
    </ligand>
</feature>
<feature type="binding site" evidence="1">
    <location>
        <position position="260"/>
    </location>
    <ligand>
        <name>sn-glycerol 3-phosphate</name>
        <dbReference type="ChEBI" id="CHEBI:57597"/>
    </ligand>
</feature>
<feature type="binding site" evidence="1">
    <location>
        <position position="261"/>
    </location>
    <ligand>
        <name>sn-glycerol 3-phosphate</name>
        <dbReference type="ChEBI" id="CHEBI:57597"/>
    </ligand>
</feature>
<feature type="binding site" evidence="1">
    <location>
        <position position="285"/>
    </location>
    <ligand>
        <name>NADPH</name>
        <dbReference type="ChEBI" id="CHEBI:57783"/>
    </ligand>
</feature>
<protein>
    <recommendedName>
        <fullName evidence="1">Glycerol-3-phosphate dehydrogenase [NAD(P)+]</fullName>
        <ecNumber evidence="1">1.1.1.94</ecNumber>
    </recommendedName>
    <alternativeName>
        <fullName evidence="1">NAD(P)(+)-dependent glycerol-3-phosphate dehydrogenase</fullName>
    </alternativeName>
    <alternativeName>
        <fullName evidence="1">NAD(P)H-dependent dihydroxyacetone-phosphate reductase</fullName>
    </alternativeName>
</protein>
<evidence type="ECO:0000255" key="1">
    <source>
        <dbReference type="HAMAP-Rule" id="MF_00394"/>
    </source>
</evidence>
<evidence type="ECO:0000305" key="2"/>